<proteinExistence type="inferred from homology"/>
<reference key="1">
    <citation type="journal article" date="2005" name="PLoS Biol.">
        <title>The genome sequence of Rickettsia felis identifies the first putative conjugative plasmid in an obligate intracellular parasite.</title>
        <authorList>
            <person name="Ogata H."/>
            <person name="Renesto P."/>
            <person name="Audic S."/>
            <person name="Robert C."/>
            <person name="Blanc G."/>
            <person name="Fournier P.-E."/>
            <person name="Parinello H."/>
            <person name="Claverie J.-M."/>
            <person name="Raoult D."/>
        </authorList>
    </citation>
    <scope>NUCLEOTIDE SEQUENCE [LARGE SCALE GENOMIC DNA]</scope>
    <source>
        <strain>ATCC VR-1525 / URRWXCal2</strain>
    </source>
</reference>
<comment type="function">
    <text evidence="1">May be required for disulfide bond formation in some proteins.</text>
</comment>
<comment type="subcellular location">
    <subcellularLocation>
        <location evidence="1">Periplasm</location>
    </subcellularLocation>
</comment>
<comment type="similarity">
    <text evidence="5">Belongs to the thioredoxin family. DsbA subfamily.</text>
</comment>
<protein>
    <recommendedName>
        <fullName>Putative protein-disulfide oxidoreductase RF_0032</fullName>
        <ecNumber>1.8.-.-</ecNumber>
    </recommendedName>
</protein>
<gene>
    <name type="ordered locus">RF_0032</name>
</gene>
<sequence length="278" mass="31414">MRSIFIVPIFLLFLSSCSEEKTQNKNQEEKQIIVQETLQNNNTSQEINQEAVNSENAAESIVPANDNNQTDEVSTPPSQEQKNPEIKPVKVTFKVDDNDMVLGNKKSNVIVVEYFSPTCPHCAYYHQTIFPELKKKYIDTNKIAYVVREFIATKQDLDAAILARCKGDINSFVQFHNIILQQQDKWAYSNKYRELLTDIGQLGGVPPEEYKQCLNSDKITETLIANTNFVANAPKFIGTPSFFVNGVQTGNYSIDSISTAVDKALEEQKEKAKNEMSL</sequence>
<accession>Q4UNH3</accession>
<organism>
    <name type="scientific">Rickettsia felis (strain ATCC VR-1525 / URRWXCal2)</name>
    <name type="common">Rickettsia azadi</name>
    <dbReference type="NCBI Taxonomy" id="315456"/>
    <lineage>
        <taxon>Bacteria</taxon>
        <taxon>Pseudomonadati</taxon>
        <taxon>Pseudomonadota</taxon>
        <taxon>Alphaproteobacteria</taxon>
        <taxon>Rickettsiales</taxon>
        <taxon>Rickettsiaceae</taxon>
        <taxon>Rickettsieae</taxon>
        <taxon>Rickettsia</taxon>
        <taxon>spotted fever group</taxon>
    </lineage>
</organism>
<name>DSB_RICFE</name>
<evidence type="ECO:0000250" key="1"/>
<evidence type="ECO:0000255" key="2"/>
<evidence type="ECO:0000255" key="3">
    <source>
        <dbReference type="PROSITE-ProRule" id="PRU00691"/>
    </source>
</evidence>
<evidence type="ECO:0000256" key="4">
    <source>
        <dbReference type="SAM" id="MobiDB-lite"/>
    </source>
</evidence>
<evidence type="ECO:0000305" key="5"/>
<dbReference type="EC" id="1.8.-.-"/>
<dbReference type="EMBL" id="CP000053">
    <property type="protein sequence ID" value="AAY60883.1"/>
    <property type="molecule type" value="Genomic_DNA"/>
</dbReference>
<dbReference type="SMR" id="Q4UNH3"/>
<dbReference type="STRING" id="315456.RF_0032"/>
<dbReference type="KEGG" id="rfe:RF_0032"/>
<dbReference type="eggNOG" id="COG1651">
    <property type="taxonomic scope" value="Bacteria"/>
</dbReference>
<dbReference type="HOGENOM" id="CLU_1022630_0_0_5"/>
<dbReference type="OrthoDB" id="8478320at2"/>
<dbReference type="Proteomes" id="UP000008548">
    <property type="component" value="Chromosome"/>
</dbReference>
<dbReference type="GO" id="GO:0042597">
    <property type="term" value="C:periplasmic space"/>
    <property type="evidence" value="ECO:0007669"/>
    <property type="project" value="UniProtKB-SubCell"/>
</dbReference>
<dbReference type="GO" id="GO:0015036">
    <property type="term" value="F:disulfide oxidoreductase activity"/>
    <property type="evidence" value="ECO:0007669"/>
    <property type="project" value="UniProtKB-ARBA"/>
</dbReference>
<dbReference type="CDD" id="cd02972">
    <property type="entry name" value="DsbA_family"/>
    <property type="match status" value="1"/>
</dbReference>
<dbReference type="Gene3D" id="3.40.30.10">
    <property type="entry name" value="Glutaredoxin"/>
    <property type="match status" value="1"/>
</dbReference>
<dbReference type="InterPro" id="IPR012336">
    <property type="entry name" value="Thioredoxin-like_fold"/>
</dbReference>
<dbReference type="InterPro" id="IPR036249">
    <property type="entry name" value="Thioredoxin-like_sf"/>
</dbReference>
<dbReference type="InterPro" id="IPR017937">
    <property type="entry name" value="Thioredoxin_CS"/>
</dbReference>
<dbReference type="InterPro" id="IPR013766">
    <property type="entry name" value="Thioredoxin_domain"/>
</dbReference>
<dbReference type="PANTHER" id="PTHR13887:SF14">
    <property type="entry name" value="DISULFIDE BOND FORMATION PROTEIN D"/>
    <property type="match status" value="1"/>
</dbReference>
<dbReference type="PANTHER" id="PTHR13887">
    <property type="entry name" value="GLUTATHIONE S-TRANSFERASE KAPPA"/>
    <property type="match status" value="1"/>
</dbReference>
<dbReference type="Pfam" id="PF13462">
    <property type="entry name" value="Thioredoxin_4"/>
    <property type="match status" value="1"/>
</dbReference>
<dbReference type="SUPFAM" id="SSF52833">
    <property type="entry name" value="Thioredoxin-like"/>
    <property type="match status" value="1"/>
</dbReference>
<dbReference type="PROSITE" id="PS00194">
    <property type="entry name" value="THIOREDOXIN_1"/>
    <property type="match status" value="1"/>
</dbReference>
<dbReference type="PROSITE" id="PS51352">
    <property type="entry name" value="THIOREDOXIN_2"/>
    <property type="match status" value="1"/>
</dbReference>
<feature type="signal peptide" evidence="2">
    <location>
        <begin position="1"/>
        <end position="18"/>
    </location>
</feature>
<feature type="chain" id="PRO_0000259990" description="Putative protein-disulfide oxidoreductase RF_0032">
    <location>
        <begin position="19"/>
        <end position="278"/>
    </location>
</feature>
<feature type="domain" description="Thioredoxin" evidence="3">
    <location>
        <begin position="77"/>
        <end position="266"/>
    </location>
</feature>
<feature type="region of interest" description="Disordered" evidence="4">
    <location>
        <begin position="62"/>
        <end position="84"/>
    </location>
</feature>
<feature type="compositionally biased region" description="Polar residues" evidence="4">
    <location>
        <begin position="65"/>
        <end position="81"/>
    </location>
</feature>
<feature type="disulfide bond" description="Redox-active" evidence="3">
    <location>
        <begin position="119"/>
        <end position="122"/>
    </location>
</feature>
<keyword id="KW-1015">Disulfide bond</keyword>
<keyword id="KW-0560">Oxidoreductase</keyword>
<keyword id="KW-0574">Periplasm</keyword>
<keyword id="KW-0676">Redox-active center</keyword>
<keyword id="KW-0732">Signal</keyword>